<dbReference type="EMBL" id="BX284604">
    <property type="protein sequence ID" value="CCD71898.1"/>
    <property type="molecule type" value="Genomic_DNA"/>
</dbReference>
<dbReference type="RefSeq" id="NP_741371.2">
    <property type="nucleotide sequence ID" value="NM_171316.6"/>
</dbReference>
<dbReference type="PDB" id="9BH5">
    <property type="method" value="EM"/>
    <property type="resolution" value="2.63 A"/>
    <property type="chains" value="CG=1-265"/>
</dbReference>
<dbReference type="PDB" id="9CAI">
    <property type="method" value="EM"/>
    <property type="resolution" value="2.59 A"/>
    <property type="chains" value="CG=1-265"/>
</dbReference>
<dbReference type="PDBsum" id="9BH5"/>
<dbReference type="PDBsum" id="9CAI"/>
<dbReference type="EMDB" id="EMD-44533"/>
<dbReference type="EMDB" id="EMD-45392"/>
<dbReference type="SMR" id="Q966C6"/>
<dbReference type="BioGRID" id="42335">
    <property type="interactions" value="94"/>
</dbReference>
<dbReference type="DIP" id="DIP-25472N"/>
<dbReference type="FunCoup" id="Q966C6">
    <property type="interactions" value="1844"/>
</dbReference>
<dbReference type="STRING" id="6239.Y24D9A.4a.1"/>
<dbReference type="PaxDb" id="6239-Y24D9A.4a"/>
<dbReference type="PeptideAtlas" id="Q966C6"/>
<dbReference type="EnsemblMetazoa" id="Y24D9A.4.1">
    <property type="protein sequence ID" value="Y24D9A.4.1"/>
    <property type="gene ID" value="WBGene00004419"/>
</dbReference>
<dbReference type="GeneID" id="177203"/>
<dbReference type="KEGG" id="cel:CELE_Y24D9A.4"/>
<dbReference type="UCSC" id="Y24D9A.4a">
    <property type="organism name" value="c. elegans"/>
</dbReference>
<dbReference type="AGR" id="WB:WBGene00004419"/>
<dbReference type="CTD" id="177203"/>
<dbReference type="WormBase" id="Y24D9A.4">
    <property type="protein sequence ID" value="CE27398"/>
    <property type="gene ID" value="WBGene00004419"/>
    <property type="gene designation" value="rpl-7A"/>
</dbReference>
<dbReference type="eggNOG" id="KOG3166">
    <property type="taxonomic scope" value="Eukaryota"/>
</dbReference>
<dbReference type="GeneTree" id="ENSGT00940000170054"/>
<dbReference type="InParanoid" id="Q966C6"/>
<dbReference type="OMA" id="RMVKWPA"/>
<dbReference type="OrthoDB" id="29563at2759"/>
<dbReference type="PhylomeDB" id="Q966C6"/>
<dbReference type="Reactome" id="R-CEL-156827">
    <property type="pathway name" value="L13a-mediated translational silencing of Ceruloplasmin expression"/>
</dbReference>
<dbReference type="Reactome" id="R-CEL-1799339">
    <property type="pathway name" value="SRP-dependent cotranslational protein targeting to membrane"/>
</dbReference>
<dbReference type="Reactome" id="R-CEL-72689">
    <property type="pathway name" value="Formation of a pool of free 40S subunits"/>
</dbReference>
<dbReference type="Reactome" id="R-CEL-72706">
    <property type="pathway name" value="GTP hydrolysis and joining of the 60S ribosomal subunit"/>
</dbReference>
<dbReference type="Reactome" id="R-CEL-975956">
    <property type="pathway name" value="Nonsense Mediated Decay (NMD) independent of the Exon Junction Complex (EJC)"/>
</dbReference>
<dbReference type="Reactome" id="R-CEL-975957">
    <property type="pathway name" value="Nonsense Mediated Decay (NMD) enhanced by the Exon Junction Complex (EJC)"/>
</dbReference>
<dbReference type="PRO" id="PR:Q966C6"/>
<dbReference type="Proteomes" id="UP000001940">
    <property type="component" value="Chromosome IV"/>
</dbReference>
<dbReference type="Bgee" id="WBGene00004419">
    <property type="expression patterns" value="Expressed in larva and 3 other cell types or tissues"/>
</dbReference>
<dbReference type="GO" id="GO:0022625">
    <property type="term" value="C:cytosolic large ribosomal subunit"/>
    <property type="evidence" value="ECO:0000318"/>
    <property type="project" value="GO_Central"/>
</dbReference>
<dbReference type="GO" id="GO:0005516">
    <property type="term" value="F:calmodulin binding"/>
    <property type="evidence" value="ECO:0000353"/>
    <property type="project" value="WormBase"/>
</dbReference>
<dbReference type="GO" id="GO:0003723">
    <property type="term" value="F:RNA binding"/>
    <property type="evidence" value="ECO:0000318"/>
    <property type="project" value="GO_Central"/>
</dbReference>
<dbReference type="GO" id="GO:0000470">
    <property type="term" value="P:maturation of LSU-rRNA"/>
    <property type="evidence" value="ECO:0000318"/>
    <property type="project" value="GO_Central"/>
</dbReference>
<dbReference type="FunFam" id="3.30.1330.30:FF:000003">
    <property type="entry name" value="60S ribosomal protein L7a"/>
    <property type="match status" value="1"/>
</dbReference>
<dbReference type="Gene3D" id="3.30.1330.30">
    <property type="match status" value="1"/>
</dbReference>
<dbReference type="InterPro" id="IPR050257">
    <property type="entry name" value="eL8/uL1-like"/>
</dbReference>
<dbReference type="InterPro" id="IPR029064">
    <property type="entry name" value="Ribosomal_eL30-like_sf"/>
</dbReference>
<dbReference type="InterPro" id="IPR004037">
    <property type="entry name" value="Ribosomal_eL8-like_CS"/>
</dbReference>
<dbReference type="InterPro" id="IPR004038">
    <property type="entry name" value="Ribosomal_eL8/eL30/eS12/Gad45"/>
</dbReference>
<dbReference type="InterPro" id="IPR018492">
    <property type="entry name" value="Ribosomal_eL8/Nhp2"/>
</dbReference>
<dbReference type="InterPro" id="IPR001921">
    <property type="entry name" value="Ribosomal_eL8_euk"/>
</dbReference>
<dbReference type="PANTHER" id="PTHR23105">
    <property type="entry name" value="RIBOSOMAL PROTEIN L7AE FAMILY MEMBER"/>
    <property type="match status" value="1"/>
</dbReference>
<dbReference type="Pfam" id="PF01248">
    <property type="entry name" value="Ribosomal_L7Ae"/>
    <property type="match status" value="1"/>
</dbReference>
<dbReference type="PRINTS" id="PR00881">
    <property type="entry name" value="L7ARS6FAMILY"/>
</dbReference>
<dbReference type="PRINTS" id="PR00882">
    <property type="entry name" value="RIBOSOMALL7A"/>
</dbReference>
<dbReference type="SUPFAM" id="SSF55315">
    <property type="entry name" value="L30e-like"/>
    <property type="match status" value="1"/>
</dbReference>
<dbReference type="PROSITE" id="PS01082">
    <property type="entry name" value="RIBOSOMAL_L7AE"/>
    <property type="match status" value="1"/>
</dbReference>
<proteinExistence type="evidence at protein level"/>
<protein>
    <recommendedName>
        <fullName evidence="4">Large ribosomal subunit protein eL8</fullName>
    </recommendedName>
    <alternativeName>
        <fullName>60S ribosomal protein L7a</fullName>
    </alternativeName>
</protein>
<comment type="subunit">
    <text evidence="3">Interacts with cmd-1 in the presence of Ca(2+).</text>
</comment>
<comment type="similarity">
    <text evidence="2">Belongs to the eukaryotic ribosomal protein eL8 family.</text>
</comment>
<keyword id="KW-0002">3D-structure</keyword>
<keyword id="KW-0112">Calmodulin-binding</keyword>
<keyword id="KW-0903">Direct protein sequencing</keyword>
<keyword id="KW-1185">Reference proteome</keyword>
<keyword id="KW-0687">Ribonucleoprotein</keyword>
<keyword id="KW-0689">Ribosomal protein</keyword>
<gene>
    <name evidence="5" type="primary">rpl-7A</name>
    <name evidence="5" type="ORF">Y24D9A.4</name>
</gene>
<evidence type="ECO:0000250" key="1"/>
<evidence type="ECO:0000255" key="2"/>
<evidence type="ECO:0000269" key="3">
    <source>
    </source>
</evidence>
<evidence type="ECO:0000305" key="4"/>
<evidence type="ECO:0000312" key="5">
    <source>
        <dbReference type="WormBase" id="Y24D9A.4"/>
    </source>
</evidence>
<sequence>MPSKKVIKKKVAAVPAHIRAQTQVQKEVKNPLFEKRARNFNIGQDIQPKKDVTRFVKWPKYIRLQRQSAILQKRLKVPPTINQFRTALDSQSARQAFKLLDKYRPESTEAKKNRLRARAEARAAGKKEEVTKRPNTVRHGVNTITRLVETRRAQLVLIAHDVNPLEIVLHLPALCRKYNVPYAIIKGKASLGTVVRRKTTAAVALVDVNPEDKSALNKLVETVNNNFSERHEEIRKHWGGGVMSAKSDAKKLKIERARARDLGKL</sequence>
<accession>Q966C6</accession>
<accession>Q8T875</accession>
<reference key="1">
    <citation type="journal article" date="1998" name="Science">
        <title>Genome sequence of the nematode C. elegans: a platform for investigating biology.</title>
        <authorList>
            <consortium name="The C. elegans sequencing consortium"/>
        </authorList>
    </citation>
    <scope>NUCLEOTIDE SEQUENCE [LARGE SCALE GENOMIC DNA]</scope>
    <source>
        <strain>Bristol N2</strain>
    </source>
</reference>
<reference evidence="4" key="2">
    <citation type="submission" date="2005-09" db="UniProtKB">
        <authorList>
            <person name="Bienvenut W.V."/>
        </authorList>
    </citation>
    <scope>PROTEIN SEQUENCE OF 39-49; 86-94; 103-111; 178-186; 189-196; 198-213 AND 219-230</scope>
    <scope>IDENTIFICATION BY MASS SPECTROMETRY</scope>
</reference>
<reference key="3">
    <citation type="journal article" date="2008" name="Cell Calcium">
        <title>Ca(2+)/Calmodulin-binding proteins from the C. elegans proteome.</title>
        <authorList>
            <person name="Shen X."/>
            <person name="Valencia C.A."/>
            <person name="Gao W."/>
            <person name="Cotten S.W."/>
            <person name="Dong B."/>
            <person name="Huang B.C."/>
            <person name="Liu R."/>
        </authorList>
    </citation>
    <scope>INTERACTION WITH CMD-1</scope>
</reference>
<name>RL7A_CAEEL</name>
<organism>
    <name type="scientific">Caenorhabditis elegans</name>
    <dbReference type="NCBI Taxonomy" id="6239"/>
    <lineage>
        <taxon>Eukaryota</taxon>
        <taxon>Metazoa</taxon>
        <taxon>Ecdysozoa</taxon>
        <taxon>Nematoda</taxon>
        <taxon>Chromadorea</taxon>
        <taxon>Rhabditida</taxon>
        <taxon>Rhabditina</taxon>
        <taxon>Rhabditomorpha</taxon>
        <taxon>Rhabditoidea</taxon>
        <taxon>Rhabditidae</taxon>
        <taxon>Peloderinae</taxon>
        <taxon>Caenorhabditis</taxon>
    </lineage>
</organism>
<feature type="initiator methionine" description="Removed" evidence="1">
    <location>
        <position position="1"/>
    </location>
</feature>
<feature type="chain" id="PRO_0000136756" description="Large ribosomal subunit protein eL8">
    <location>
        <begin position="2"/>
        <end position="265"/>
    </location>
</feature>